<dbReference type="EMBL" id="CP000253">
    <property type="protein sequence ID" value="ABD31653.1"/>
    <property type="molecule type" value="Genomic_DNA"/>
</dbReference>
<dbReference type="RefSeq" id="WP_000977037.1">
    <property type="nucleotide sequence ID" value="NZ_LS483365.1"/>
</dbReference>
<dbReference type="RefSeq" id="YP_501107.1">
    <property type="nucleotide sequence ID" value="NC_007795.1"/>
</dbReference>
<dbReference type="SMR" id="Q2FVQ7"/>
<dbReference type="STRING" id="93061.SAOUHSC_02645"/>
<dbReference type="PaxDb" id="1280-SAXN108_2615"/>
<dbReference type="GeneID" id="3921207"/>
<dbReference type="KEGG" id="sao:SAOUHSC_02645"/>
<dbReference type="PATRIC" id="fig|93061.5.peg.2392"/>
<dbReference type="eggNOG" id="COG3279">
    <property type="taxonomic scope" value="Bacteria"/>
</dbReference>
<dbReference type="HOGENOM" id="CLU_106729_4_0_9"/>
<dbReference type="OrthoDB" id="9808614at2"/>
<dbReference type="Proteomes" id="UP000008816">
    <property type="component" value="Chromosome"/>
</dbReference>
<dbReference type="GO" id="GO:0005737">
    <property type="term" value="C:cytoplasm"/>
    <property type="evidence" value="ECO:0007669"/>
    <property type="project" value="UniProtKB-SubCell"/>
</dbReference>
<dbReference type="GO" id="GO:0003677">
    <property type="term" value="F:DNA binding"/>
    <property type="evidence" value="ECO:0007669"/>
    <property type="project" value="UniProtKB-KW"/>
</dbReference>
<dbReference type="GO" id="GO:0000156">
    <property type="term" value="F:phosphorelay response regulator activity"/>
    <property type="evidence" value="ECO:0007669"/>
    <property type="project" value="InterPro"/>
</dbReference>
<dbReference type="Gene3D" id="2.40.50.1020">
    <property type="entry name" value="LytTr DNA-binding domain"/>
    <property type="match status" value="1"/>
</dbReference>
<dbReference type="InterPro" id="IPR046947">
    <property type="entry name" value="LytR-like"/>
</dbReference>
<dbReference type="InterPro" id="IPR007492">
    <property type="entry name" value="LytTR_DNA-bd_dom"/>
</dbReference>
<dbReference type="PANTHER" id="PTHR37299:SF2">
    <property type="entry name" value="HTH LYTTR-TYPE DOMAIN-CONTAINING PROTEIN"/>
    <property type="match status" value="1"/>
</dbReference>
<dbReference type="PANTHER" id="PTHR37299">
    <property type="entry name" value="TRANSCRIPTIONAL REGULATOR-RELATED"/>
    <property type="match status" value="1"/>
</dbReference>
<dbReference type="Pfam" id="PF04397">
    <property type="entry name" value="LytTR"/>
    <property type="match status" value="1"/>
</dbReference>
<dbReference type="SMART" id="SM00850">
    <property type="entry name" value="LytTR"/>
    <property type="match status" value="1"/>
</dbReference>
<dbReference type="PROSITE" id="PS50930">
    <property type="entry name" value="HTH_LYTTR"/>
    <property type="match status" value="1"/>
</dbReference>
<feature type="chain" id="PRO_0000298607" description="Uncharacterized HTH-type transcriptional regulator SAOUHSC_02645">
    <location>
        <begin position="1"/>
        <end position="147"/>
    </location>
</feature>
<feature type="domain" description="HTH LytTR-type" evidence="1">
    <location>
        <begin position="44"/>
        <end position="147"/>
    </location>
</feature>
<protein>
    <recommendedName>
        <fullName>Uncharacterized HTH-type transcriptional regulator SAOUHSC_02645</fullName>
    </recommendedName>
</protein>
<name>Y2645_STAA8</name>
<keyword id="KW-0963">Cytoplasm</keyword>
<keyword id="KW-0238">DNA-binding</keyword>
<keyword id="KW-1185">Reference proteome</keyword>
<keyword id="KW-0804">Transcription</keyword>
<keyword id="KW-0805">Transcription regulation</keyword>
<evidence type="ECO:0000255" key="1">
    <source>
        <dbReference type="PROSITE-ProRule" id="PRU00112"/>
    </source>
</evidence>
<evidence type="ECO:0000305" key="2"/>
<reference key="1">
    <citation type="book" date="2006" name="Gram positive pathogens, 2nd edition">
        <title>The Staphylococcus aureus NCTC 8325 genome.</title>
        <editorList>
            <person name="Fischetti V."/>
            <person name="Novick R."/>
            <person name="Ferretti J."/>
            <person name="Portnoy D."/>
            <person name="Rood J."/>
        </editorList>
        <authorList>
            <person name="Gillaspy A.F."/>
            <person name="Worrell V."/>
            <person name="Orvis J."/>
            <person name="Roe B.A."/>
            <person name="Dyer D.W."/>
            <person name="Iandolo J.J."/>
        </authorList>
    </citation>
    <scope>NUCLEOTIDE SEQUENCE [LARGE SCALE GENOMIC DNA]</scope>
    <source>
        <strain>NCTC 8325 / PS 47</strain>
    </source>
</reference>
<comment type="subcellular location">
    <subcellularLocation>
        <location evidence="2">Cytoplasm</location>
    </subcellularLocation>
</comment>
<accession>Q2FVQ7</accession>
<proteinExistence type="predicted"/>
<sequence>MMKLNLFINANETESYIDIHAPKMNDNVQSIINAVNDLDKSHTLVGYIDKEIHIINVSDVITFQVINKNVTAITSNQKFKLKLRLYELEKQLPQHFIRISKSEIVNKYYIEKLLLEPNGLIRMYLKDAHYTYSSRRYLKSIKERLSI</sequence>
<organism>
    <name type="scientific">Staphylococcus aureus (strain NCTC 8325 / PS 47)</name>
    <dbReference type="NCBI Taxonomy" id="93061"/>
    <lineage>
        <taxon>Bacteria</taxon>
        <taxon>Bacillati</taxon>
        <taxon>Bacillota</taxon>
        <taxon>Bacilli</taxon>
        <taxon>Bacillales</taxon>
        <taxon>Staphylococcaceae</taxon>
        <taxon>Staphylococcus</taxon>
    </lineage>
</organism>
<gene>
    <name type="ordered locus">SAOUHSC_02645</name>
</gene>